<organism>
    <name type="scientific">Dehalococcoides mccartyi (strain ATCC BAA-2100 / JCM 16839 / KCTC 5957 / BAV1)</name>
    <dbReference type="NCBI Taxonomy" id="216389"/>
    <lineage>
        <taxon>Bacteria</taxon>
        <taxon>Bacillati</taxon>
        <taxon>Chloroflexota</taxon>
        <taxon>Dehalococcoidia</taxon>
        <taxon>Dehalococcoidales</taxon>
        <taxon>Dehalococcoidaceae</taxon>
        <taxon>Dehalococcoides</taxon>
    </lineage>
</organism>
<name>RL23_DEHMB</name>
<gene>
    <name evidence="1" type="primary">rplW</name>
    <name type="ordered locus">DehaBAV1_0453</name>
</gene>
<dbReference type="EMBL" id="CP000688">
    <property type="protein sequence ID" value="ABQ17038.1"/>
    <property type="molecule type" value="Genomic_DNA"/>
</dbReference>
<dbReference type="SMR" id="A5FRZ1"/>
<dbReference type="KEGG" id="deb:DehaBAV1_0453"/>
<dbReference type="PATRIC" id="fig|216389.18.peg.496"/>
<dbReference type="HOGENOM" id="CLU_037562_3_2_0"/>
<dbReference type="GO" id="GO:1990904">
    <property type="term" value="C:ribonucleoprotein complex"/>
    <property type="evidence" value="ECO:0007669"/>
    <property type="project" value="UniProtKB-KW"/>
</dbReference>
<dbReference type="GO" id="GO:0005840">
    <property type="term" value="C:ribosome"/>
    <property type="evidence" value="ECO:0007669"/>
    <property type="project" value="UniProtKB-KW"/>
</dbReference>
<dbReference type="GO" id="GO:0019843">
    <property type="term" value="F:rRNA binding"/>
    <property type="evidence" value="ECO:0007669"/>
    <property type="project" value="UniProtKB-UniRule"/>
</dbReference>
<dbReference type="GO" id="GO:0003735">
    <property type="term" value="F:structural constituent of ribosome"/>
    <property type="evidence" value="ECO:0007669"/>
    <property type="project" value="InterPro"/>
</dbReference>
<dbReference type="GO" id="GO:0006412">
    <property type="term" value="P:translation"/>
    <property type="evidence" value="ECO:0007669"/>
    <property type="project" value="UniProtKB-UniRule"/>
</dbReference>
<dbReference type="FunFam" id="3.30.70.330:FF:000001">
    <property type="entry name" value="50S ribosomal protein L23"/>
    <property type="match status" value="1"/>
</dbReference>
<dbReference type="Gene3D" id="3.30.70.330">
    <property type="match status" value="1"/>
</dbReference>
<dbReference type="HAMAP" id="MF_01369_B">
    <property type="entry name" value="Ribosomal_uL23_B"/>
    <property type="match status" value="1"/>
</dbReference>
<dbReference type="InterPro" id="IPR012677">
    <property type="entry name" value="Nucleotide-bd_a/b_plait_sf"/>
</dbReference>
<dbReference type="InterPro" id="IPR013025">
    <property type="entry name" value="Ribosomal_uL23-like"/>
</dbReference>
<dbReference type="InterPro" id="IPR012678">
    <property type="entry name" value="Ribosomal_uL23/eL15/eS24_sf"/>
</dbReference>
<dbReference type="InterPro" id="IPR001014">
    <property type="entry name" value="Ribosomal_uL23_CS"/>
</dbReference>
<dbReference type="NCBIfam" id="NF004363">
    <property type="entry name" value="PRK05738.2-4"/>
    <property type="match status" value="1"/>
</dbReference>
<dbReference type="PANTHER" id="PTHR11620">
    <property type="entry name" value="60S RIBOSOMAL PROTEIN L23A"/>
    <property type="match status" value="1"/>
</dbReference>
<dbReference type="Pfam" id="PF00276">
    <property type="entry name" value="Ribosomal_L23"/>
    <property type="match status" value="1"/>
</dbReference>
<dbReference type="SUPFAM" id="SSF54189">
    <property type="entry name" value="Ribosomal proteins S24e, L23 and L15e"/>
    <property type="match status" value="1"/>
</dbReference>
<dbReference type="PROSITE" id="PS00050">
    <property type="entry name" value="RIBOSOMAL_L23"/>
    <property type="match status" value="1"/>
</dbReference>
<feature type="chain" id="PRO_1000087215" description="Large ribosomal subunit protein uL23">
    <location>
        <begin position="1"/>
        <end position="94"/>
    </location>
</feature>
<evidence type="ECO:0000255" key="1">
    <source>
        <dbReference type="HAMAP-Rule" id="MF_01369"/>
    </source>
</evidence>
<evidence type="ECO:0000305" key="2"/>
<accession>A5FRZ1</accession>
<proteinExistence type="inferred from homology"/>
<sequence>MNLYEVLRRPLISEKNSVHATQNKYAFEIAKGANKRMVKLAVEQAFNVTVEDVNMLHIPGKQKRMGRNLIQTAGLRKAIITLKEGDKITLFEGV</sequence>
<reference key="1">
    <citation type="submission" date="2007-05" db="EMBL/GenBank/DDBJ databases">
        <title>Complete sequence of Dehalococcoides sp. BAV1.</title>
        <authorList>
            <consortium name="US DOE Joint Genome Institute"/>
            <person name="Copeland A."/>
            <person name="Lucas S."/>
            <person name="Lapidus A."/>
            <person name="Barry K."/>
            <person name="Detter J.C."/>
            <person name="Glavina del Rio T."/>
            <person name="Hammon N."/>
            <person name="Israni S."/>
            <person name="Pitluck S."/>
            <person name="Lowry S."/>
            <person name="Clum A."/>
            <person name="Schmutz J."/>
            <person name="Larimer F."/>
            <person name="Land M."/>
            <person name="Hauser L."/>
            <person name="Kyrpides N."/>
            <person name="Kim E."/>
            <person name="Ritalahti K.M."/>
            <person name="Loeffler F."/>
            <person name="Richardson P."/>
        </authorList>
    </citation>
    <scope>NUCLEOTIDE SEQUENCE [LARGE SCALE GENOMIC DNA]</scope>
    <source>
        <strain>ATCC BAA-2100 / JCM 16839 / KCTC 5957 / BAV1</strain>
    </source>
</reference>
<comment type="function">
    <text evidence="1">One of the early assembly proteins it binds 23S rRNA. One of the proteins that surrounds the polypeptide exit tunnel on the outside of the ribosome. Forms the main docking site for trigger factor binding to the ribosome.</text>
</comment>
<comment type="subunit">
    <text evidence="1">Part of the 50S ribosomal subunit. Contacts protein L29, and trigger factor when it is bound to the ribosome.</text>
</comment>
<comment type="similarity">
    <text evidence="1">Belongs to the universal ribosomal protein uL23 family.</text>
</comment>
<keyword id="KW-0687">Ribonucleoprotein</keyword>
<keyword id="KW-0689">Ribosomal protein</keyword>
<keyword id="KW-0694">RNA-binding</keyword>
<keyword id="KW-0699">rRNA-binding</keyword>
<protein>
    <recommendedName>
        <fullName evidence="1">Large ribosomal subunit protein uL23</fullName>
    </recommendedName>
    <alternativeName>
        <fullName evidence="2">50S ribosomal protein L23</fullName>
    </alternativeName>
</protein>